<gene>
    <name evidence="1" type="primary">rpoH</name>
    <name type="ordered locus">ZMO0749</name>
</gene>
<proteinExistence type="inferred from homology"/>
<keyword id="KW-0963">Cytoplasm</keyword>
<keyword id="KW-0238">DNA-binding</keyword>
<keyword id="KW-1185">Reference proteome</keyword>
<keyword id="KW-0731">Sigma factor</keyword>
<keyword id="KW-0346">Stress response</keyword>
<keyword id="KW-0804">Transcription</keyword>
<keyword id="KW-0805">Transcription regulation</keyword>
<evidence type="ECO:0000255" key="1">
    <source>
        <dbReference type="HAMAP-Rule" id="MF_00961"/>
    </source>
</evidence>
<evidence type="ECO:0000305" key="2"/>
<dbReference type="EMBL" id="D50832">
    <property type="protein sequence ID" value="BAA09444.1"/>
    <property type="molecule type" value="Genomic_DNA"/>
</dbReference>
<dbReference type="EMBL" id="AE008692">
    <property type="protein sequence ID" value="AAV89373.1"/>
    <property type="molecule type" value="Genomic_DNA"/>
</dbReference>
<dbReference type="PIR" id="S60169">
    <property type="entry name" value="S60169"/>
</dbReference>
<dbReference type="RefSeq" id="WP_011240630.1">
    <property type="nucleotide sequence ID" value="NZ_CP035711.1"/>
</dbReference>
<dbReference type="SMR" id="P50512"/>
<dbReference type="STRING" id="264203.ZMO0749"/>
<dbReference type="KEGG" id="zmo:ZMO0749"/>
<dbReference type="eggNOG" id="COG0568">
    <property type="taxonomic scope" value="Bacteria"/>
</dbReference>
<dbReference type="HOGENOM" id="CLU_014793_3_5_5"/>
<dbReference type="Proteomes" id="UP000001173">
    <property type="component" value="Chromosome"/>
</dbReference>
<dbReference type="GO" id="GO:0005737">
    <property type="term" value="C:cytoplasm"/>
    <property type="evidence" value="ECO:0007669"/>
    <property type="project" value="UniProtKB-SubCell"/>
</dbReference>
<dbReference type="GO" id="GO:0003677">
    <property type="term" value="F:DNA binding"/>
    <property type="evidence" value="ECO:0007669"/>
    <property type="project" value="UniProtKB-UniRule"/>
</dbReference>
<dbReference type="GO" id="GO:0016987">
    <property type="term" value="F:sigma factor activity"/>
    <property type="evidence" value="ECO:0007669"/>
    <property type="project" value="UniProtKB-UniRule"/>
</dbReference>
<dbReference type="GO" id="GO:0006352">
    <property type="term" value="P:DNA-templated transcription initiation"/>
    <property type="evidence" value="ECO:0007669"/>
    <property type="project" value="UniProtKB-UniRule"/>
</dbReference>
<dbReference type="GO" id="GO:0009408">
    <property type="term" value="P:response to heat"/>
    <property type="evidence" value="ECO:0007669"/>
    <property type="project" value="UniProtKB-UniRule"/>
</dbReference>
<dbReference type="CDD" id="cd06171">
    <property type="entry name" value="Sigma70_r4"/>
    <property type="match status" value="1"/>
</dbReference>
<dbReference type="Gene3D" id="1.20.140.160">
    <property type="match status" value="1"/>
</dbReference>
<dbReference type="Gene3D" id="1.10.601.10">
    <property type="entry name" value="RNA Polymerase Primary Sigma Factor"/>
    <property type="match status" value="1"/>
</dbReference>
<dbReference type="HAMAP" id="MF_00961">
    <property type="entry name" value="Sigma70_RpoH"/>
    <property type="match status" value="1"/>
</dbReference>
<dbReference type="InterPro" id="IPR014284">
    <property type="entry name" value="RNA_pol_sigma-70_dom"/>
</dbReference>
<dbReference type="InterPro" id="IPR000943">
    <property type="entry name" value="RNA_pol_sigma70"/>
</dbReference>
<dbReference type="InterPro" id="IPR009042">
    <property type="entry name" value="RNA_pol_sigma70_r1_2"/>
</dbReference>
<dbReference type="InterPro" id="IPR007627">
    <property type="entry name" value="RNA_pol_sigma70_r2"/>
</dbReference>
<dbReference type="InterPro" id="IPR007630">
    <property type="entry name" value="RNA_pol_sigma70_r4"/>
</dbReference>
<dbReference type="InterPro" id="IPR013325">
    <property type="entry name" value="RNA_pol_sigma_r2"/>
</dbReference>
<dbReference type="InterPro" id="IPR013324">
    <property type="entry name" value="RNA_pol_sigma_r3/r4-like"/>
</dbReference>
<dbReference type="InterPro" id="IPR012759">
    <property type="entry name" value="RNA_pol_sigma_RpoH_proteobac"/>
</dbReference>
<dbReference type="InterPro" id="IPR050813">
    <property type="entry name" value="Sigma-70_Factor"/>
</dbReference>
<dbReference type="NCBIfam" id="NF005143">
    <property type="entry name" value="PRK06596.1"/>
    <property type="match status" value="1"/>
</dbReference>
<dbReference type="NCBIfam" id="TIGR02392">
    <property type="entry name" value="rpoH_proteo"/>
    <property type="match status" value="1"/>
</dbReference>
<dbReference type="NCBIfam" id="TIGR02937">
    <property type="entry name" value="sigma70-ECF"/>
    <property type="match status" value="1"/>
</dbReference>
<dbReference type="PANTHER" id="PTHR30376:SF3">
    <property type="entry name" value="RNA POLYMERASE SIGMA FACTOR RPOH"/>
    <property type="match status" value="1"/>
</dbReference>
<dbReference type="PANTHER" id="PTHR30376">
    <property type="entry name" value="SIGMA FACTOR RPOH HEAT SHOCK RELATED"/>
    <property type="match status" value="1"/>
</dbReference>
<dbReference type="Pfam" id="PF00140">
    <property type="entry name" value="Sigma70_r1_2"/>
    <property type="match status" value="1"/>
</dbReference>
<dbReference type="Pfam" id="PF04542">
    <property type="entry name" value="Sigma70_r2"/>
    <property type="match status" value="1"/>
</dbReference>
<dbReference type="Pfam" id="PF04545">
    <property type="entry name" value="Sigma70_r4"/>
    <property type="match status" value="1"/>
</dbReference>
<dbReference type="PIRSF" id="PIRSF000770">
    <property type="entry name" value="RNA_pol_sigma-SigE/K"/>
    <property type="match status" value="1"/>
</dbReference>
<dbReference type="PRINTS" id="PR00046">
    <property type="entry name" value="SIGMA70FCT"/>
</dbReference>
<dbReference type="SUPFAM" id="SSF88946">
    <property type="entry name" value="Sigma2 domain of RNA polymerase sigma factors"/>
    <property type="match status" value="1"/>
</dbReference>
<dbReference type="SUPFAM" id="SSF88659">
    <property type="entry name" value="Sigma3 and sigma4 domains of RNA polymerase sigma factors"/>
    <property type="match status" value="1"/>
</dbReference>
<dbReference type="PROSITE" id="PS00715">
    <property type="entry name" value="SIGMA70_1"/>
    <property type="match status" value="1"/>
</dbReference>
<dbReference type="PROSITE" id="PS00716">
    <property type="entry name" value="SIGMA70_2"/>
    <property type="match status" value="1"/>
</dbReference>
<accession>P50512</accession>
<accession>Q5NPI7</accession>
<protein>
    <recommendedName>
        <fullName evidence="1">RNA polymerase sigma factor RpoH</fullName>
    </recommendedName>
    <alternativeName>
        <fullName evidence="1">RNA polymerase sigma-32 factor</fullName>
    </alternativeName>
</protein>
<sequence>MATSSTLPAVVPALGGDQSLNHYLADIRKFPILKPEEEYMLAKRFQEHQDPKAASRLVTSHLRLVAKIAMGYRGYGLPVSELISEGNIGLMQGVKKFDPERGFRLATYAIWWIKASIQEYILRSWSLVKMGTTAAQKKLFFNLRRLKSNMNAFEDGDLKPDEVDSIATNLGVSNEEVVNMNRRMAMGGDSSLNITMREDGEGQMQDWLVDQEPLQDQQIEEEEESLVRHKLLIEAMDKLNDREKHILTERRLSDNPKTLEELSQVYGVSRERVRQIEVRAFDKLQKAIMELAGDRKLLPAMA</sequence>
<reference key="1">
    <citation type="journal article" date="1995" name="Nucleic Acids Res.">
        <title>Isolation and sequence analysis of rpoH genes encoding sigma 32 homologs from Gram-negative bacteria: conserved mRNA and protein segments for heat shock regulation.</title>
        <authorList>
            <person name="Nakahigashi K."/>
            <person name="Yanagi H."/>
            <person name="Yura T."/>
        </authorList>
    </citation>
    <scope>NUCLEOTIDE SEQUENCE [GENOMIC DNA]</scope>
    <source>
        <strain>ATCC 31821 / ZM4 / CP4</strain>
    </source>
</reference>
<reference key="2">
    <citation type="journal article" date="2005" name="Nat. Biotechnol.">
        <title>The genome sequence of the ethanologenic bacterium Zymomonas mobilis ZM4.</title>
        <authorList>
            <person name="Seo J.-S."/>
            <person name="Chong H."/>
            <person name="Park H.S."/>
            <person name="Yoon K.-O."/>
            <person name="Jung C."/>
            <person name="Kim J.J."/>
            <person name="Hong J.H."/>
            <person name="Kim H."/>
            <person name="Kim J.-H."/>
            <person name="Kil J.-I."/>
            <person name="Park C.J."/>
            <person name="Oh H.-M."/>
            <person name="Lee J.-S."/>
            <person name="Jin S.-J."/>
            <person name="Um H.-W."/>
            <person name="Lee H.-J."/>
            <person name="Oh S.-J."/>
            <person name="Kim J.Y."/>
            <person name="Kang H.L."/>
            <person name="Lee S.Y."/>
            <person name="Lee K.J."/>
            <person name="Kang H.S."/>
        </authorList>
    </citation>
    <scope>NUCLEOTIDE SEQUENCE [LARGE SCALE GENOMIC DNA]</scope>
    <source>
        <strain>ATCC 31821 / ZM4 / CP4</strain>
    </source>
</reference>
<organism>
    <name type="scientific">Zymomonas mobilis subsp. mobilis (strain ATCC 31821 / ZM4 / CP4)</name>
    <dbReference type="NCBI Taxonomy" id="264203"/>
    <lineage>
        <taxon>Bacteria</taxon>
        <taxon>Pseudomonadati</taxon>
        <taxon>Pseudomonadota</taxon>
        <taxon>Alphaproteobacteria</taxon>
        <taxon>Sphingomonadales</taxon>
        <taxon>Zymomonadaceae</taxon>
        <taxon>Zymomonas</taxon>
    </lineage>
</organism>
<name>RPOH_ZYMMO</name>
<feature type="chain" id="PRO_0000093966" description="RNA polymerase sigma factor RpoH">
    <location>
        <begin position="1"/>
        <end position="302"/>
    </location>
</feature>
<feature type="DNA-binding region" description="H-T-H motif" evidence="1">
    <location>
        <begin position="259"/>
        <end position="278"/>
    </location>
</feature>
<feature type="region of interest" description="Sigma-70 factor domain-2" evidence="1">
    <location>
        <begin position="57"/>
        <end position="126"/>
    </location>
</feature>
<feature type="region of interest" description="Sigma-70 factor domain-4" evidence="1">
    <location>
        <begin position="235"/>
        <end position="286"/>
    </location>
</feature>
<feature type="short sequence motif" description="Interaction with polymerase core subunit RpoC">
    <location>
        <begin position="81"/>
        <end position="84"/>
    </location>
</feature>
<feature type="sequence conflict" description="In Ref. 1; BAA09444." evidence="2" ref="1">
    <original>K</original>
    <variation>R</variation>
    <location>
        <position position="238"/>
    </location>
</feature>
<comment type="function">
    <text evidence="1">Sigma factors are initiation factors that promote the attachment of RNA polymerase to specific initiation sites and are then released. This sigma factor is involved in regulation of expression of heat shock genes.</text>
</comment>
<comment type="subunit">
    <text evidence="1">Interacts with the RNA polymerase core enzyme.</text>
</comment>
<comment type="subcellular location">
    <subcellularLocation>
        <location evidence="1">Cytoplasm</location>
    </subcellularLocation>
</comment>
<comment type="similarity">
    <text evidence="1">Belongs to the sigma-70 factor family. RpoH subfamily.</text>
</comment>